<comment type="function">
    <text evidence="1">An accessory protein needed during the final step in the assembly of 30S ribosomal subunit, possibly for assembly of the head region. Essential for efficient processing of 16S rRNA. May be needed both before and after RbfA during the maturation of 16S rRNA. It has affinity for free ribosomal 30S subunits but not for 70S ribosomes.</text>
</comment>
<comment type="subunit">
    <text evidence="1">Binds ribosomal protein uS19.</text>
</comment>
<comment type="subcellular location">
    <subcellularLocation>
        <location evidence="1">Cytoplasm</location>
    </subcellularLocation>
</comment>
<comment type="domain">
    <text evidence="1">The PRC barrel domain binds ribosomal protein uS19.</text>
</comment>
<comment type="similarity">
    <text evidence="1">Belongs to the RimM family.</text>
</comment>
<evidence type="ECO:0000255" key="1">
    <source>
        <dbReference type="HAMAP-Rule" id="MF_00014"/>
    </source>
</evidence>
<sequence>MEENWLEIGTIVAPQGLEGELRVLSVSDFPERFQKRGMRGIQGPQGGEIREITLLRGRELPGKNVYVIKLEGVENREQAEALRGYKLWANKLEKPRLKADEYHVSELVNLEVYHHLTGEKIGVVVDIFWAGNDILAVQLEANLASVKKKSPSSDSEARALVPFVKEIVPLVDLKAARIEIAPPPGLLEINLS</sequence>
<keyword id="KW-0143">Chaperone</keyword>
<keyword id="KW-0963">Cytoplasm</keyword>
<keyword id="KW-0690">Ribosome biogenesis</keyword>
<keyword id="KW-0698">rRNA processing</keyword>
<name>RIMM_MICAN</name>
<organism>
    <name type="scientific">Microcystis aeruginosa (strain NIES-843 / IAM M-2473)</name>
    <dbReference type="NCBI Taxonomy" id="449447"/>
    <lineage>
        <taxon>Bacteria</taxon>
        <taxon>Bacillati</taxon>
        <taxon>Cyanobacteriota</taxon>
        <taxon>Cyanophyceae</taxon>
        <taxon>Oscillatoriophycideae</taxon>
        <taxon>Chroococcales</taxon>
        <taxon>Microcystaceae</taxon>
        <taxon>Microcystis</taxon>
    </lineage>
</organism>
<proteinExistence type="inferred from homology"/>
<reference key="1">
    <citation type="journal article" date="2007" name="DNA Res.">
        <title>Complete genomic structure of the bloom-forming toxic cyanobacterium Microcystis aeruginosa NIES-843.</title>
        <authorList>
            <person name="Kaneko T."/>
            <person name="Nakajima N."/>
            <person name="Okamoto S."/>
            <person name="Suzuki I."/>
            <person name="Tanabe Y."/>
            <person name="Tamaoki M."/>
            <person name="Nakamura Y."/>
            <person name="Kasai F."/>
            <person name="Watanabe A."/>
            <person name="Kawashima K."/>
            <person name="Kishida Y."/>
            <person name="Ono A."/>
            <person name="Shimizu Y."/>
            <person name="Takahashi C."/>
            <person name="Minami C."/>
            <person name="Fujishiro T."/>
            <person name="Kohara M."/>
            <person name="Katoh M."/>
            <person name="Nakazaki N."/>
            <person name="Nakayama S."/>
            <person name="Yamada M."/>
            <person name="Tabata S."/>
            <person name="Watanabe M.M."/>
        </authorList>
    </citation>
    <scope>NUCLEOTIDE SEQUENCE [LARGE SCALE GENOMIC DNA]</scope>
    <source>
        <strain>NIES-843 / IAM M-247</strain>
    </source>
</reference>
<gene>
    <name evidence="1" type="primary">rimM</name>
    <name type="ordered locus">MAE_13730</name>
</gene>
<feature type="chain" id="PRO_0000351779" description="Ribosome maturation factor RimM">
    <location>
        <begin position="1"/>
        <end position="192"/>
    </location>
</feature>
<feature type="domain" description="PRC barrel" evidence="1">
    <location>
        <begin position="99"/>
        <end position="186"/>
    </location>
</feature>
<dbReference type="EMBL" id="AP009552">
    <property type="protein sequence ID" value="BAG01195.1"/>
    <property type="molecule type" value="Genomic_DNA"/>
</dbReference>
<dbReference type="RefSeq" id="WP_002795455.1">
    <property type="nucleotide sequence ID" value="NC_010296.1"/>
</dbReference>
<dbReference type="SMR" id="B0JU07"/>
<dbReference type="STRING" id="449447.MAE_13730"/>
<dbReference type="PaxDb" id="449447-MAE_13730"/>
<dbReference type="EnsemblBacteria" id="BAG01195">
    <property type="protein sequence ID" value="BAG01195"/>
    <property type="gene ID" value="MAE_13730"/>
</dbReference>
<dbReference type="GeneID" id="66706227"/>
<dbReference type="KEGG" id="mar:MAE_13730"/>
<dbReference type="eggNOG" id="COG0806">
    <property type="taxonomic scope" value="Bacteria"/>
</dbReference>
<dbReference type="HOGENOM" id="CLU_077636_3_0_3"/>
<dbReference type="BioCyc" id="MAER449447:MAE_RS06050-MONOMER"/>
<dbReference type="Proteomes" id="UP000001510">
    <property type="component" value="Chromosome"/>
</dbReference>
<dbReference type="GO" id="GO:0005737">
    <property type="term" value="C:cytoplasm"/>
    <property type="evidence" value="ECO:0007669"/>
    <property type="project" value="UniProtKB-SubCell"/>
</dbReference>
<dbReference type="GO" id="GO:0005840">
    <property type="term" value="C:ribosome"/>
    <property type="evidence" value="ECO:0007669"/>
    <property type="project" value="InterPro"/>
</dbReference>
<dbReference type="GO" id="GO:0043022">
    <property type="term" value="F:ribosome binding"/>
    <property type="evidence" value="ECO:0007669"/>
    <property type="project" value="InterPro"/>
</dbReference>
<dbReference type="GO" id="GO:0042274">
    <property type="term" value="P:ribosomal small subunit biogenesis"/>
    <property type="evidence" value="ECO:0007669"/>
    <property type="project" value="UniProtKB-UniRule"/>
</dbReference>
<dbReference type="GO" id="GO:0006364">
    <property type="term" value="P:rRNA processing"/>
    <property type="evidence" value="ECO:0007669"/>
    <property type="project" value="UniProtKB-UniRule"/>
</dbReference>
<dbReference type="Gene3D" id="2.30.30.240">
    <property type="entry name" value="PRC-barrel domain"/>
    <property type="match status" value="1"/>
</dbReference>
<dbReference type="Gene3D" id="2.40.30.60">
    <property type="entry name" value="RimM"/>
    <property type="match status" value="1"/>
</dbReference>
<dbReference type="HAMAP" id="MF_00014">
    <property type="entry name" value="Ribosome_mat_RimM"/>
    <property type="match status" value="1"/>
</dbReference>
<dbReference type="InterPro" id="IPR011033">
    <property type="entry name" value="PRC_barrel-like_sf"/>
</dbReference>
<dbReference type="InterPro" id="IPR056792">
    <property type="entry name" value="PRC_RimM"/>
</dbReference>
<dbReference type="InterPro" id="IPR011961">
    <property type="entry name" value="RimM"/>
</dbReference>
<dbReference type="InterPro" id="IPR002676">
    <property type="entry name" value="RimM_N"/>
</dbReference>
<dbReference type="InterPro" id="IPR036976">
    <property type="entry name" value="RimM_N_sf"/>
</dbReference>
<dbReference type="InterPro" id="IPR009000">
    <property type="entry name" value="Transl_B-barrel_sf"/>
</dbReference>
<dbReference type="NCBIfam" id="TIGR02273">
    <property type="entry name" value="16S_RimM"/>
    <property type="match status" value="1"/>
</dbReference>
<dbReference type="PANTHER" id="PTHR33692">
    <property type="entry name" value="RIBOSOME MATURATION FACTOR RIMM"/>
    <property type="match status" value="1"/>
</dbReference>
<dbReference type="PANTHER" id="PTHR33692:SF1">
    <property type="entry name" value="RIBOSOME MATURATION FACTOR RIMM"/>
    <property type="match status" value="1"/>
</dbReference>
<dbReference type="Pfam" id="PF24986">
    <property type="entry name" value="PRC_RimM"/>
    <property type="match status" value="1"/>
</dbReference>
<dbReference type="Pfam" id="PF01782">
    <property type="entry name" value="RimM"/>
    <property type="match status" value="1"/>
</dbReference>
<dbReference type="SUPFAM" id="SSF50346">
    <property type="entry name" value="PRC-barrel domain"/>
    <property type="match status" value="1"/>
</dbReference>
<dbReference type="SUPFAM" id="SSF50447">
    <property type="entry name" value="Translation proteins"/>
    <property type="match status" value="1"/>
</dbReference>
<protein>
    <recommendedName>
        <fullName evidence="1">Ribosome maturation factor RimM</fullName>
    </recommendedName>
</protein>
<accession>B0JU07</accession>